<keyword id="KW-0963">Cytoplasm</keyword>
<keyword id="KW-0238">DNA-binding</keyword>
<keyword id="KW-0804">Transcription</keyword>
<keyword id="KW-0805">Transcription regulation</keyword>
<comment type="subcellular location">
    <subcellularLocation>
        <location evidence="1">Cytoplasm</location>
    </subcellularLocation>
</comment>
<comment type="similarity">
    <text evidence="1">Belongs to the TACO1 family.</text>
</comment>
<accession>A0Q6Q0</accession>
<sequence>MAGHSKWANIKHKKAKEDAKRGKIFTKLIREITVAARLGGGDKDANPRLRAAIATALANNMSKDTIERAVVKGAGGDESANVEEVRYEGYGPGGVAIIVDCMTDNRNRTVGEVRHAFTKSGGNLGTDGSVAYMFTKRGIISFAPGVDEDALMEVALEAGAEDIITHEDGSIDVYTDPYDFSDIQEVLIEKGFNSENAEVTFDAETKAELDAETAEKVMALIDKLEDLDDVQSVYSNANFTQELIEQIG</sequence>
<organism>
    <name type="scientific">Francisella tularensis subsp. novicida (strain U112)</name>
    <dbReference type="NCBI Taxonomy" id="401614"/>
    <lineage>
        <taxon>Bacteria</taxon>
        <taxon>Pseudomonadati</taxon>
        <taxon>Pseudomonadota</taxon>
        <taxon>Gammaproteobacteria</taxon>
        <taxon>Thiotrichales</taxon>
        <taxon>Francisellaceae</taxon>
        <taxon>Francisella</taxon>
    </lineage>
</organism>
<name>Y1028_FRATN</name>
<protein>
    <recommendedName>
        <fullName evidence="1">Probable transcriptional regulatory protein FTN_1028</fullName>
    </recommendedName>
</protein>
<gene>
    <name type="ordered locus">FTN_1028</name>
</gene>
<evidence type="ECO:0000255" key="1">
    <source>
        <dbReference type="HAMAP-Rule" id="MF_00693"/>
    </source>
</evidence>
<proteinExistence type="inferred from homology"/>
<feature type="chain" id="PRO_1000045310" description="Probable transcriptional regulatory protein FTN_1028">
    <location>
        <begin position="1"/>
        <end position="248"/>
    </location>
</feature>
<dbReference type="EMBL" id="CP000439">
    <property type="protein sequence ID" value="ABK89915.1"/>
    <property type="molecule type" value="Genomic_DNA"/>
</dbReference>
<dbReference type="RefSeq" id="WP_003039507.1">
    <property type="nucleotide sequence ID" value="NC_008601.1"/>
</dbReference>
<dbReference type="SMR" id="A0Q6Q0"/>
<dbReference type="KEGG" id="ftn:FTN_1028"/>
<dbReference type="KEGG" id="ftx:AW25_980"/>
<dbReference type="BioCyc" id="FTUL401614:G1G75-1071-MONOMER"/>
<dbReference type="Proteomes" id="UP000000762">
    <property type="component" value="Chromosome"/>
</dbReference>
<dbReference type="GO" id="GO:0005829">
    <property type="term" value="C:cytosol"/>
    <property type="evidence" value="ECO:0007669"/>
    <property type="project" value="TreeGrafter"/>
</dbReference>
<dbReference type="GO" id="GO:0003677">
    <property type="term" value="F:DNA binding"/>
    <property type="evidence" value="ECO:0007669"/>
    <property type="project" value="UniProtKB-UniRule"/>
</dbReference>
<dbReference type="GO" id="GO:0006355">
    <property type="term" value="P:regulation of DNA-templated transcription"/>
    <property type="evidence" value="ECO:0007669"/>
    <property type="project" value="UniProtKB-UniRule"/>
</dbReference>
<dbReference type="FunFam" id="1.10.10.200:FF:000001">
    <property type="entry name" value="Probable transcriptional regulatory protein YebC"/>
    <property type="match status" value="1"/>
</dbReference>
<dbReference type="FunFam" id="3.30.70.980:FF:000002">
    <property type="entry name" value="Probable transcriptional regulatory protein YebC"/>
    <property type="match status" value="1"/>
</dbReference>
<dbReference type="Gene3D" id="1.10.10.200">
    <property type="match status" value="1"/>
</dbReference>
<dbReference type="Gene3D" id="3.30.70.980">
    <property type="match status" value="2"/>
</dbReference>
<dbReference type="HAMAP" id="MF_00693">
    <property type="entry name" value="Transcrip_reg_TACO1"/>
    <property type="match status" value="1"/>
</dbReference>
<dbReference type="InterPro" id="IPR017856">
    <property type="entry name" value="Integrase-like_N"/>
</dbReference>
<dbReference type="InterPro" id="IPR048300">
    <property type="entry name" value="TACO1_YebC-like_2nd/3rd_dom"/>
</dbReference>
<dbReference type="InterPro" id="IPR049083">
    <property type="entry name" value="TACO1_YebC_N"/>
</dbReference>
<dbReference type="InterPro" id="IPR002876">
    <property type="entry name" value="Transcrip_reg_TACO1-like"/>
</dbReference>
<dbReference type="InterPro" id="IPR026564">
    <property type="entry name" value="Transcrip_reg_TACO1-like_dom3"/>
</dbReference>
<dbReference type="InterPro" id="IPR029072">
    <property type="entry name" value="YebC-like"/>
</dbReference>
<dbReference type="NCBIfam" id="NF001030">
    <property type="entry name" value="PRK00110.1"/>
    <property type="match status" value="1"/>
</dbReference>
<dbReference type="NCBIfam" id="NF009044">
    <property type="entry name" value="PRK12378.1"/>
    <property type="match status" value="1"/>
</dbReference>
<dbReference type="NCBIfam" id="TIGR01033">
    <property type="entry name" value="YebC/PmpR family DNA-binding transcriptional regulator"/>
    <property type="match status" value="1"/>
</dbReference>
<dbReference type="PANTHER" id="PTHR12532:SF6">
    <property type="entry name" value="TRANSCRIPTIONAL REGULATORY PROTEIN YEBC-RELATED"/>
    <property type="match status" value="1"/>
</dbReference>
<dbReference type="PANTHER" id="PTHR12532">
    <property type="entry name" value="TRANSLATIONAL ACTIVATOR OF CYTOCHROME C OXIDASE 1"/>
    <property type="match status" value="1"/>
</dbReference>
<dbReference type="Pfam" id="PF20772">
    <property type="entry name" value="TACO1_YebC_N"/>
    <property type="match status" value="1"/>
</dbReference>
<dbReference type="Pfam" id="PF01709">
    <property type="entry name" value="Transcrip_reg"/>
    <property type="match status" value="1"/>
</dbReference>
<dbReference type="SUPFAM" id="SSF75625">
    <property type="entry name" value="YebC-like"/>
    <property type="match status" value="1"/>
</dbReference>
<reference key="1">
    <citation type="journal article" date="2007" name="Genome Biol.">
        <title>Comparison of Francisella tularensis genomes reveals evolutionary events associated with the emergence of human pathogenic strains.</title>
        <authorList>
            <person name="Rohmer L."/>
            <person name="Fong C."/>
            <person name="Abmayr S."/>
            <person name="Wasnick M."/>
            <person name="Larson Freeman T.J."/>
            <person name="Radey M."/>
            <person name="Guina T."/>
            <person name="Svensson K."/>
            <person name="Hayden H.S."/>
            <person name="Jacobs M."/>
            <person name="Gallagher L.A."/>
            <person name="Manoil C."/>
            <person name="Ernst R.K."/>
            <person name="Drees B."/>
            <person name="Buckley D."/>
            <person name="Haugen E."/>
            <person name="Bovee D."/>
            <person name="Zhou Y."/>
            <person name="Chang J."/>
            <person name="Levy R."/>
            <person name="Lim R."/>
            <person name="Gillett W."/>
            <person name="Guenthener D."/>
            <person name="Kang A."/>
            <person name="Shaffer S.A."/>
            <person name="Taylor G."/>
            <person name="Chen J."/>
            <person name="Gallis B."/>
            <person name="D'Argenio D.A."/>
            <person name="Forsman M."/>
            <person name="Olson M.V."/>
            <person name="Goodlett D.R."/>
            <person name="Kaul R."/>
            <person name="Miller S.I."/>
            <person name="Brittnacher M.J."/>
        </authorList>
    </citation>
    <scope>NUCLEOTIDE SEQUENCE [LARGE SCALE GENOMIC DNA]</scope>
    <source>
        <strain>U112</strain>
    </source>
</reference>